<sequence>MPDIRVEVVYALSERQYLRTVSLVVGSTVEDAIKASGLLELRPDIDLEKNKVGIYSRPVKLGDKLNDGDRVEIYRPLIADPKELRRQRAEQAKK</sequence>
<evidence type="ECO:0000255" key="1">
    <source>
        <dbReference type="HAMAP-Rule" id="MF_00460"/>
    </source>
</evidence>
<comment type="similarity">
    <text evidence="1">Belongs to the UPF0125 (RnfH) family.</text>
</comment>
<gene>
    <name evidence="1" type="primary">rnfH</name>
    <name type="ordered locus">YPN_2895</name>
    <name type="ORF">YP516_3274</name>
</gene>
<protein>
    <recommendedName>
        <fullName evidence="1">Protein RnfH</fullName>
    </recommendedName>
</protein>
<reference key="1">
    <citation type="journal article" date="2006" name="J. Bacteriol.">
        <title>Complete genome sequence of Yersinia pestis strains Antiqua and Nepal516: evidence of gene reduction in an emerging pathogen.</title>
        <authorList>
            <person name="Chain P.S.G."/>
            <person name="Hu P."/>
            <person name="Malfatti S.A."/>
            <person name="Radnedge L."/>
            <person name="Larimer F."/>
            <person name="Vergez L.M."/>
            <person name="Worsham P."/>
            <person name="Chu M.C."/>
            <person name="Andersen G.L."/>
        </authorList>
    </citation>
    <scope>NUCLEOTIDE SEQUENCE [LARGE SCALE GENOMIC DNA]</scope>
    <source>
        <strain>Nepal516</strain>
    </source>
</reference>
<reference key="2">
    <citation type="submission" date="2009-04" db="EMBL/GenBank/DDBJ databases">
        <title>Yersinia pestis Nepal516A whole genome shotgun sequencing project.</title>
        <authorList>
            <person name="Plunkett G. III"/>
            <person name="Anderson B.D."/>
            <person name="Baumler D.J."/>
            <person name="Burland V."/>
            <person name="Cabot E.L."/>
            <person name="Glasner J.D."/>
            <person name="Mau B."/>
            <person name="Neeno-Eckwall E."/>
            <person name="Perna N.T."/>
            <person name="Munk A.C."/>
            <person name="Tapia R."/>
            <person name="Green L.D."/>
            <person name="Rogers Y.C."/>
            <person name="Detter J.C."/>
            <person name="Bruce D.C."/>
            <person name="Brettin T.S."/>
        </authorList>
    </citation>
    <scope>NUCLEOTIDE SEQUENCE [LARGE SCALE GENOMIC DNA]</scope>
    <source>
        <strain>Nepal516</strain>
    </source>
</reference>
<name>RNFH_YERPN</name>
<accession>Q1CFK8</accession>
<accession>C4GWR9</accession>
<dbReference type="EMBL" id="CP000305">
    <property type="protein sequence ID" value="ABG19222.1"/>
    <property type="molecule type" value="Genomic_DNA"/>
</dbReference>
<dbReference type="EMBL" id="ACNQ01000017">
    <property type="protein sequence ID" value="EEO75369.1"/>
    <property type="molecule type" value="Genomic_DNA"/>
</dbReference>
<dbReference type="RefSeq" id="WP_002210716.1">
    <property type="nucleotide sequence ID" value="NZ_ACNQ01000017.1"/>
</dbReference>
<dbReference type="SMR" id="Q1CFK8"/>
<dbReference type="KEGG" id="ypn:YPN_2895"/>
<dbReference type="HOGENOM" id="CLU_150721_1_0_6"/>
<dbReference type="Proteomes" id="UP000008936">
    <property type="component" value="Chromosome"/>
</dbReference>
<dbReference type="Gene3D" id="3.10.20.280">
    <property type="entry name" value="RnfH-like"/>
    <property type="match status" value="1"/>
</dbReference>
<dbReference type="HAMAP" id="MF_00460">
    <property type="entry name" value="UPF0125_RnfH"/>
    <property type="match status" value="1"/>
</dbReference>
<dbReference type="InterPro" id="IPR016155">
    <property type="entry name" value="Mopterin_synth/thiamin_S_b"/>
</dbReference>
<dbReference type="InterPro" id="IPR005346">
    <property type="entry name" value="RnfH"/>
</dbReference>
<dbReference type="InterPro" id="IPR037021">
    <property type="entry name" value="RnfH_sf"/>
</dbReference>
<dbReference type="NCBIfam" id="NF002490">
    <property type="entry name" value="PRK01777.1"/>
    <property type="match status" value="1"/>
</dbReference>
<dbReference type="PANTHER" id="PTHR37483">
    <property type="entry name" value="UPF0125 PROTEIN RATB"/>
    <property type="match status" value="1"/>
</dbReference>
<dbReference type="PANTHER" id="PTHR37483:SF1">
    <property type="entry name" value="UPF0125 PROTEIN RATB"/>
    <property type="match status" value="1"/>
</dbReference>
<dbReference type="Pfam" id="PF03658">
    <property type="entry name" value="Ub-RnfH"/>
    <property type="match status" value="1"/>
</dbReference>
<dbReference type="SUPFAM" id="SSF54285">
    <property type="entry name" value="MoaD/ThiS"/>
    <property type="match status" value="1"/>
</dbReference>
<proteinExistence type="inferred from homology"/>
<feature type="chain" id="PRO_1000013598" description="Protein RnfH">
    <location>
        <begin position="1"/>
        <end position="94"/>
    </location>
</feature>
<organism>
    <name type="scientific">Yersinia pestis bv. Antiqua (strain Nepal516)</name>
    <dbReference type="NCBI Taxonomy" id="377628"/>
    <lineage>
        <taxon>Bacteria</taxon>
        <taxon>Pseudomonadati</taxon>
        <taxon>Pseudomonadota</taxon>
        <taxon>Gammaproteobacteria</taxon>
        <taxon>Enterobacterales</taxon>
        <taxon>Yersiniaceae</taxon>
        <taxon>Yersinia</taxon>
    </lineage>
</organism>